<comment type="function">
    <text>High-affinity glucose transporter.</text>
</comment>
<comment type="subcellular location">
    <subcellularLocation>
        <location>Membrane</location>
        <topology>Multi-pass membrane protein</topology>
    </subcellularLocation>
</comment>
<comment type="similarity">
    <text evidence="4">Belongs to the major facilitator superfamily. Sugar transporter (TC 2.A.1.1) family.</text>
</comment>
<name>GHT2_SCHPO</name>
<sequence length="531" mass="58846">MGFKRGKNFTLVMLIFVSMAGWMFGADTGSIGGVTSMRDFRERYADRYDPITDQYSLSSARQGLLTGMVNVGSLFGCIISSPIADRFGKRLSIIGFCAVYIIGIIVQVTAVPSWVQIMVAKIWTGIGIGALSVLAPGYQSETAPPSIRGTVVVTYQLFVTGGIFIAACINMGTHKLHKTAQWRVSIGINLLWGIITMIGILFLPESPRYLIQVGKDEEAVRVLSESAELFPDSEEVQNEYHRLKSSIDEEFAGGPCSWASIFGKDIRYRTFLGMFVMSLQQLTGNNYFFYYGFSVMQGAGINSPYLSAMILDAVNFGCTFGGMYVLERFGRRNPLIIGGIWQSICFFIYSAVGSRALYHKNGTSNTRAGAVMIVMACLFIFGFAQTWAPAAYVIVGESYPVRYRSKCAAVATASNWLWNFLISFFTPFIQASIGFKYGYVFASCNLTGAIVIFLFAKETKGLTLEEINELYMSVIKPWESGNFKLNYSEQKKVEKEKSRKGGARGESVEYVERASNTDSSPQYSSHEEDYA</sequence>
<organism>
    <name type="scientific">Schizosaccharomyces pombe (strain 972 / ATCC 24843)</name>
    <name type="common">Fission yeast</name>
    <dbReference type="NCBI Taxonomy" id="284812"/>
    <lineage>
        <taxon>Eukaryota</taxon>
        <taxon>Fungi</taxon>
        <taxon>Dikarya</taxon>
        <taxon>Ascomycota</taxon>
        <taxon>Taphrinomycotina</taxon>
        <taxon>Schizosaccharomycetes</taxon>
        <taxon>Schizosaccharomycetales</taxon>
        <taxon>Schizosaccharomycetaceae</taxon>
        <taxon>Schizosaccharomyces</taxon>
    </lineage>
</organism>
<dbReference type="EMBL" id="AF017180">
    <property type="protein sequence ID" value="AAB70519.1"/>
    <property type="molecule type" value="mRNA"/>
</dbReference>
<dbReference type="EMBL" id="CU329671">
    <property type="protein sequence ID" value="CAA19288.1"/>
    <property type="molecule type" value="Genomic_DNA"/>
</dbReference>
<dbReference type="PIR" id="T40480">
    <property type="entry name" value="T40480"/>
</dbReference>
<dbReference type="PIR" id="T43533">
    <property type="entry name" value="T43533"/>
</dbReference>
<dbReference type="RefSeq" id="NP_596425.1">
    <property type="nucleotide sequence ID" value="NM_001022344.2"/>
</dbReference>
<dbReference type="SMR" id="O74969"/>
<dbReference type="BioGRID" id="276521">
    <property type="interactions" value="5"/>
</dbReference>
<dbReference type="FunCoup" id="O74969">
    <property type="interactions" value="323"/>
</dbReference>
<dbReference type="STRING" id="284812.O74969"/>
<dbReference type="TCDB" id="2.A.1.1.21">
    <property type="family name" value="the major facilitator superfamily (mfs)"/>
</dbReference>
<dbReference type="GlyCosmos" id="O74969">
    <property type="glycosylation" value="1 site, No reported glycans"/>
</dbReference>
<dbReference type="iPTMnet" id="O74969"/>
<dbReference type="PaxDb" id="4896-SPBC4B4.08.1"/>
<dbReference type="EnsemblFungi" id="SPBC4B4.08.1">
    <property type="protein sequence ID" value="SPBC4B4.08.1:pep"/>
    <property type="gene ID" value="SPBC4B4.08"/>
</dbReference>
<dbReference type="GeneID" id="2539977"/>
<dbReference type="KEGG" id="spo:2539977"/>
<dbReference type="PomBase" id="SPBC4B4.08">
    <property type="gene designation" value="ght2"/>
</dbReference>
<dbReference type="VEuPathDB" id="FungiDB:SPBC4B4.08"/>
<dbReference type="eggNOG" id="KOG0254">
    <property type="taxonomic scope" value="Eukaryota"/>
</dbReference>
<dbReference type="HOGENOM" id="CLU_001265_30_1_1"/>
<dbReference type="InParanoid" id="O74969"/>
<dbReference type="OMA" id="INNMACP"/>
<dbReference type="PhylomeDB" id="O74969"/>
<dbReference type="PRO" id="PR:O74969"/>
<dbReference type="Proteomes" id="UP000002485">
    <property type="component" value="Chromosome II"/>
</dbReference>
<dbReference type="GO" id="GO:0005886">
    <property type="term" value="C:plasma membrane"/>
    <property type="evidence" value="ECO:0000314"/>
    <property type="project" value="PomBase"/>
</dbReference>
<dbReference type="GO" id="GO:0005351">
    <property type="term" value="F:carbohydrate:proton symporter activity"/>
    <property type="evidence" value="ECO:0000318"/>
    <property type="project" value="GO_Central"/>
</dbReference>
<dbReference type="GO" id="GO:0005354">
    <property type="term" value="F:galactose transmembrane transporter activity"/>
    <property type="evidence" value="ECO:0000269"/>
    <property type="project" value="PomBase"/>
</dbReference>
<dbReference type="GO" id="GO:0008643">
    <property type="term" value="P:carbohydrate transport"/>
    <property type="evidence" value="ECO:0000318"/>
    <property type="project" value="GO_Central"/>
</dbReference>
<dbReference type="GO" id="GO:0046323">
    <property type="term" value="P:D-glucose import"/>
    <property type="evidence" value="ECO:0000315"/>
    <property type="project" value="PomBase"/>
</dbReference>
<dbReference type="GO" id="GO:0140425">
    <property type="term" value="P:galactose import across plasma membrane"/>
    <property type="evidence" value="ECO:0000269"/>
    <property type="project" value="PomBase"/>
</dbReference>
<dbReference type="CDD" id="cd17356">
    <property type="entry name" value="MFS_HXT"/>
    <property type="match status" value="1"/>
</dbReference>
<dbReference type="FunFam" id="1.20.1250.20:FF:000044">
    <property type="entry name" value="Hexose transporter Hxt3p"/>
    <property type="match status" value="1"/>
</dbReference>
<dbReference type="Gene3D" id="1.20.1250.20">
    <property type="entry name" value="MFS general substrate transporter like domains"/>
    <property type="match status" value="1"/>
</dbReference>
<dbReference type="InterPro" id="IPR020846">
    <property type="entry name" value="MFS_dom"/>
</dbReference>
<dbReference type="InterPro" id="IPR005828">
    <property type="entry name" value="MFS_sugar_transport-like"/>
</dbReference>
<dbReference type="InterPro" id="IPR050360">
    <property type="entry name" value="MFS_Sugar_Transporters"/>
</dbReference>
<dbReference type="InterPro" id="IPR036259">
    <property type="entry name" value="MFS_trans_sf"/>
</dbReference>
<dbReference type="InterPro" id="IPR003663">
    <property type="entry name" value="Sugar/inositol_transpt"/>
</dbReference>
<dbReference type="InterPro" id="IPR005829">
    <property type="entry name" value="Sugar_transporter_CS"/>
</dbReference>
<dbReference type="NCBIfam" id="TIGR00879">
    <property type="entry name" value="SP"/>
    <property type="match status" value="1"/>
</dbReference>
<dbReference type="PANTHER" id="PTHR48022:SF89">
    <property type="entry name" value="HIGH-AFFINITY GLUCOSE TRANSPORTER GHT2"/>
    <property type="match status" value="1"/>
</dbReference>
<dbReference type="PANTHER" id="PTHR48022">
    <property type="entry name" value="PLASTIDIC GLUCOSE TRANSPORTER 4"/>
    <property type="match status" value="1"/>
</dbReference>
<dbReference type="Pfam" id="PF00083">
    <property type="entry name" value="Sugar_tr"/>
    <property type="match status" value="1"/>
</dbReference>
<dbReference type="PRINTS" id="PR00171">
    <property type="entry name" value="SUGRTRNSPORT"/>
</dbReference>
<dbReference type="SUPFAM" id="SSF103473">
    <property type="entry name" value="MFS general substrate transporter"/>
    <property type="match status" value="1"/>
</dbReference>
<dbReference type="PROSITE" id="PS50850">
    <property type="entry name" value="MFS"/>
    <property type="match status" value="1"/>
</dbReference>
<dbReference type="PROSITE" id="PS00216">
    <property type="entry name" value="SUGAR_TRANSPORT_1"/>
    <property type="match status" value="1"/>
</dbReference>
<keyword id="KW-0325">Glycoprotein</keyword>
<keyword id="KW-0472">Membrane</keyword>
<keyword id="KW-0597">Phosphoprotein</keyword>
<keyword id="KW-1185">Reference proteome</keyword>
<keyword id="KW-0762">Sugar transport</keyword>
<keyword id="KW-0812">Transmembrane</keyword>
<keyword id="KW-1133">Transmembrane helix</keyword>
<keyword id="KW-0813">Transport</keyword>
<protein>
    <recommendedName>
        <fullName>High-affinity glucose transporter ght2</fullName>
    </recommendedName>
    <alternativeName>
        <fullName>Hexose transporter 2</fullName>
    </alternativeName>
</protein>
<accession>O74969</accession>
<accession>O13346</accession>
<evidence type="ECO:0000255" key="1"/>
<evidence type="ECO:0000256" key="2">
    <source>
        <dbReference type="SAM" id="MobiDB-lite"/>
    </source>
</evidence>
<evidence type="ECO:0000269" key="3">
    <source>
    </source>
</evidence>
<evidence type="ECO:0000305" key="4"/>
<gene>
    <name type="primary">ght2</name>
    <name type="ORF">SPBC4B4.08</name>
</gene>
<feature type="chain" id="PRO_0000050410" description="High-affinity glucose transporter ght2">
    <location>
        <begin position="1"/>
        <end position="531"/>
    </location>
</feature>
<feature type="topological domain" description="Cytoplasmic" evidence="1">
    <location>
        <begin position="5"/>
        <end position="13"/>
    </location>
</feature>
<feature type="transmembrane region" description="Helical; Name=1" evidence="1">
    <location>
        <begin position="14"/>
        <end position="34"/>
    </location>
</feature>
<feature type="topological domain" description="Extracellular" evidence="1">
    <location>
        <begin position="35"/>
        <end position="62"/>
    </location>
</feature>
<feature type="transmembrane region" description="Helical; Name=2" evidence="1">
    <location>
        <begin position="63"/>
        <end position="83"/>
    </location>
</feature>
<feature type="topological domain" description="Cytoplasmic" evidence="1">
    <location>
        <begin position="84"/>
        <end position="91"/>
    </location>
</feature>
<feature type="transmembrane region" description="Helical; Name=3" evidence="1">
    <location>
        <begin position="92"/>
        <end position="112"/>
    </location>
</feature>
<feature type="topological domain" description="Extracellular" evidence="1">
    <location>
        <begin position="113"/>
        <end position="116"/>
    </location>
</feature>
<feature type="transmembrane region" description="Helical; Name=4" evidence="1">
    <location>
        <begin position="117"/>
        <end position="137"/>
    </location>
</feature>
<feature type="topological domain" description="Cytoplasmic" evidence="1">
    <location>
        <begin position="138"/>
        <end position="148"/>
    </location>
</feature>
<feature type="transmembrane region" description="Helical; Name=5" evidence="1">
    <location>
        <begin position="149"/>
        <end position="169"/>
    </location>
</feature>
<feature type="topological domain" description="Extracellular" evidence="1">
    <location>
        <begin position="170"/>
        <end position="183"/>
    </location>
</feature>
<feature type="transmembrane region" description="Helical; Name=6" evidence="1">
    <location>
        <begin position="184"/>
        <end position="204"/>
    </location>
</feature>
<feature type="topological domain" description="Cytoplasmic" evidence="1">
    <location>
        <begin position="205"/>
        <end position="270"/>
    </location>
</feature>
<feature type="transmembrane region" description="Helical; Name=7" evidence="1">
    <location>
        <begin position="271"/>
        <end position="289"/>
    </location>
</feature>
<feature type="topological domain" description="Extracellular" evidence="1">
    <location>
        <begin position="290"/>
        <end position="305"/>
    </location>
</feature>
<feature type="transmembrane region" description="Helical; Name=8" evidence="1">
    <location>
        <begin position="306"/>
        <end position="326"/>
    </location>
</feature>
<feature type="topological domain" description="Cytoplasmic" evidence="1">
    <location>
        <begin position="327"/>
        <end position="332"/>
    </location>
</feature>
<feature type="transmembrane region" description="Helical; Name=9" evidence="1">
    <location>
        <begin position="333"/>
        <end position="353"/>
    </location>
</feature>
<feature type="topological domain" description="Extracellular" evidence="1">
    <location>
        <begin position="354"/>
        <end position="367"/>
    </location>
</feature>
<feature type="transmembrane region" description="Helical; Name=10" evidence="1">
    <location>
        <begin position="368"/>
        <end position="388"/>
    </location>
</feature>
<feature type="topological domain" description="Cytoplasmic" evidence="1">
    <location>
        <begin position="389"/>
        <end position="408"/>
    </location>
</feature>
<feature type="transmembrane region" description="Helical; Name=11" evidence="1">
    <location>
        <begin position="409"/>
        <end position="429"/>
    </location>
</feature>
<feature type="topological domain" description="Extracellular" evidence="1">
    <location>
        <begin position="430"/>
        <end position="436"/>
    </location>
</feature>
<feature type="transmembrane region" description="Helical; Name=12" evidence="1">
    <location>
        <begin position="437"/>
        <end position="457"/>
    </location>
</feature>
<feature type="topological domain" description="Cytoplasmic" evidence="1">
    <location>
        <begin position="458"/>
        <end position="531"/>
    </location>
</feature>
<feature type="region of interest" description="Disordered" evidence="2">
    <location>
        <begin position="491"/>
        <end position="531"/>
    </location>
</feature>
<feature type="compositionally biased region" description="Polar residues" evidence="2">
    <location>
        <begin position="514"/>
        <end position="524"/>
    </location>
</feature>
<feature type="modified residue" description="Phosphoserine" evidence="3">
    <location>
        <position position="507"/>
    </location>
</feature>
<feature type="modified residue" description="Phosphoserine" evidence="3">
    <location>
        <position position="515"/>
    </location>
</feature>
<feature type="modified residue" description="Phosphoserine" evidence="3">
    <location>
        <position position="519"/>
    </location>
</feature>
<feature type="modified residue" description="Phosphoserine" evidence="3">
    <location>
        <position position="520"/>
    </location>
</feature>
<feature type="modified residue" description="Phosphotyrosine" evidence="3">
    <location>
        <position position="523"/>
    </location>
</feature>
<feature type="glycosylation site" description="N-linked (GlcNAc...) asparagine" evidence="1">
    <location>
        <position position="361"/>
    </location>
</feature>
<feature type="sequence conflict" description="In Ref. 1; AAB70519." evidence="4" ref="1">
    <location>
        <begin position="1"/>
        <end position="12"/>
    </location>
</feature>
<feature type="sequence conflict" description="In Ref. 1; AAB70519." evidence="4" ref="1">
    <original>G</original>
    <variation>R</variation>
    <location>
        <position position="29"/>
    </location>
</feature>
<proteinExistence type="evidence at protein level"/>
<reference key="1">
    <citation type="journal article" date="2000" name="J. Bacteriol.">
        <title>Multiple hexose transporters of Schizosaccharomyces pombe.</title>
        <authorList>
            <person name="Heiland S."/>
            <person name="Radovanovic N."/>
            <person name="Hoefer M."/>
            <person name="Winderickx J."/>
            <person name="Lichtenberg H."/>
        </authorList>
    </citation>
    <scope>NUCLEOTIDE SEQUENCE [MRNA]</scope>
    <scope>CHARACTERIZATION</scope>
    <source>
        <strain>972 / ATCC 24843</strain>
    </source>
</reference>
<reference key="2">
    <citation type="journal article" date="2002" name="Nature">
        <title>The genome sequence of Schizosaccharomyces pombe.</title>
        <authorList>
            <person name="Wood V."/>
            <person name="Gwilliam R."/>
            <person name="Rajandream M.A."/>
            <person name="Lyne M.H."/>
            <person name="Lyne R."/>
            <person name="Stewart A."/>
            <person name="Sgouros J.G."/>
            <person name="Peat N."/>
            <person name="Hayles J."/>
            <person name="Baker S.G."/>
            <person name="Basham D."/>
            <person name="Bowman S."/>
            <person name="Brooks K."/>
            <person name="Brown D."/>
            <person name="Brown S."/>
            <person name="Chillingworth T."/>
            <person name="Churcher C.M."/>
            <person name="Collins M."/>
            <person name="Connor R."/>
            <person name="Cronin A."/>
            <person name="Davis P."/>
            <person name="Feltwell T."/>
            <person name="Fraser A."/>
            <person name="Gentles S."/>
            <person name="Goble A."/>
            <person name="Hamlin N."/>
            <person name="Harris D.E."/>
            <person name="Hidalgo J."/>
            <person name="Hodgson G."/>
            <person name="Holroyd S."/>
            <person name="Hornsby T."/>
            <person name="Howarth S."/>
            <person name="Huckle E.J."/>
            <person name="Hunt S."/>
            <person name="Jagels K."/>
            <person name="James K.D."/>
            <person name="Jones L."/>
            <person name="Jones M."/>
            <person name="Leather S."/>
            <person name="McDonald S."/>
            <person name="McLean J."/>
            <person name="Mooney P."/>
            <person name="Moule S."/>
            <person name="Mungall K.L."/>
            <person name="Murphy L.D."/>
            <person name="Niblett D."/>
            <person name="Odell C."/>
            <person name="Oliver K."/>
            <person name="O'Neil S."/>
            <person name="Pearson D."/>
            <person name="Quail M.A."/>
            <person name="Rabbinowitsch E."/>
            <person name="Rutherford K.M."/>
            <person name="Rutter S."/>
            <person name="Saunders D."/>
            <person name="Seeger K."/>
            <person name="Sharp S."/>
            <person name="Skelton J."/>
            <person name="Simmonds M.N."/>
            <person name="Squares R."/>
            <person name="Squares S."/>
            <person name="Stevens K."/>
            <person name="Taylor K."/>
            <person name="Taylor R.G."/>
            <person name="Tivey A."/>
            <person name="Walsh S.V."/>
            <person name="Warren T."/>
            <person name="Whitehead S."/>
            <person name="Woodward J.R."/>
            <person name="Volckaert G."/>
            <person name="Aert R."/>
            <person name="Robben J."/>
            <person name="Grymonprez B."/>
            <person name="Weltjens I."/>
            <person name="Vanstreels E."/>
            <person name="Rieger M."/>
            <person name="Schaefer M."/>
            <person name="Mueller-Auer S."/>
            <person name="Gabel C."/>
            <person name="Fuchs M."/>
            <person name="Duesterhoeft A."/>
            <person name="Fritzc C."/>
            <person name="Holzer E."/>
            <person name="Moestl D."/>
            <person name="Hilbert H."/>
            <person name="Borzym K."/>
            <person name="Langer I."/>
            <person name="Beck A."/>
            <person name="Lehrach H."/>
            <person name="Reinhardt R."/>
            <person name="Pohl T.M."/>
            <person name="Eger P."/>
            <person name="Zimmermann W."/>
            <person name="Wedler H."/>
            <person name="Wambutt R."/>
            <person name="Purnelle B."/>
            <person name="Goffeau A."/>
            <person name="Cadieu E."/>
            <person name="Dreano S."/>
            <person name="Gloux S."/>
            <person name="Lelaure V."/>
            <person name="Mottier S."/>
            <person name="Galibert F."/>
            <person name="Aves S.J."/>
            <person name="Xiang Z."/>
            <person name="Hunt C."/>
            <person name="Moore K."/>
            <person name="Hurst S.M."/>
            <person name="Lucas M."/>
            <person name="Rochet M."/>
            <person name="Gaillardin C."/>
            <person name="Tallada V.A."/>
            <person name="Garzon A."/>
            <person name="Thode G."/>
            <person name="Daga R.R."/>
            <person name="Cruzado L."/>
            <person name="Jimenez J."/>
            <person name="Sanchez M."/>
            <person name="del Rey F."/>
            <person name="Benito J."/>
            <person name="Dominguez A."/>
            <person name="Revuelta J.L."/>
            <person name="Moreno S."/>
            <person name="Armstrong J."/>
            <person name="Forsburg S.L."/>
            <person name="Cerutti L."/>
            <person name="Lowe T."/>
            <person name="McCombie W.R."/>
            <person name="Paulsen I."/>
            <person name="Potashkin J."/>
            <person name="Shpakovski G.V."/>
            <person name="Ussery D."/>
            <person name="Barrell B.G."/>
            <person name="Nurse P."/>
        </authorList>
    </citation>
    <scope>NUCLEOTIDE SEQUENCE [LARGE SCALE GENOMIC DNA]</scope>
    <source>
        <strain>972 / ATCC 24843</strain>
    </source>
</reference>
<reference key="3">
    <citation type="journal article" date="2008" name="J. Proteome Res.">
        <title>Phosphoproteome analysis of fission yeast.</title>
        <authorList>
            <person name="Wilson-Grady J.T."/>
            <person name="Villen J."/>
            <person name="Gygi S.P."/>
        </authorList>
    </citation>
    <scope>PHOSPHORYLATION [LARGE SCALE ANALYSIS] AT SER-507; SER-515; SER-519; SER-520 AND TYR-523</scope>
    <scope>IDENTIFICATION BY MASS SPECTROMETRY</scope>
</reference>